<keyword id="KW-0963">Cytoplasm</keyword>
<keyword id="KW-0520">NAD</keyword>
<keyword id="KW-0560">Oxidoreductase</keyword>
<keyword id="KW-0664">Pyridoxine biosynthesis</keyword>
<keyword id="KW-1185">Reference proteome</keyword>
<name>PDXB_SHESH</name>
<accession>A8FTT7</accession>
<protein>
    <recommendedName>
        <fullName evidence="1">Erythronate-4-phosphate dehydrogenase</fullName>
        <ecNumber evidence="1">1.1.1.290</ecNumber>
    </recommendedName>
</protein>
<proteinExistence type="inferred from homology"/>
<comment type="function">
    <text evidence="1">Catalyzes the oxidation of erythronate-4-phosphate to 3-hydroxy-2-oxo-4-phosphonooxybutanoate.</text>
</comment>
<comment type="catalytic activity">
    <reaction evidence="1">
        <text>4-phospho-D-erythronate + NAD(+) = (R)-3-hydroxy-2-oxo-4-phosphooxybutanoate + NADH + H(+)</text>
        <dbReference type="Rhea" id="RHEA:18829"/>
        <dbReference type="ChEBI" id="CHEBI:15378"/>
        <dbReference type="ChEBI" id="CHEBI:57540"/>
        <dbReference type="ChEBI" id="CHEBI:57945"/>
        <dbReference type="ChEBI" id="CHEBI:58538"/>
        <dbReference type="ChEBI" id="CHEBI:58766"/>
        <dbReference type="EC" id="1.1.1.290"/>
    </reaction>
</comment>
<comment type="pathway">
    <text evidence="1">Cofactor biosynthesis; pyridoxine 5'-phosphate biosynthesis; pyridoxine 5'-phosphate from D-erythrose 4-phosphate: step 2/5.</text>
</comment>
<comment type="subunit">
    <text evidence="1">Homodimer.</text>
</comment>
<comment type="subcellular location">
    <subcellularLocation>
        <location evidence="1">Cytoplasm</location>
    </subcellularLocation>
</comment>
<comment type="similarity">
    <text evidence="1">Belongs to the D-isomer specific 2-hydroxyacid dehydrogenase family. PdxB subfamily.</text>
</comment>
<sequence length="387" mass="42670">MKILADENMPYVEQLFGDLGTIEAVNGRTLTSEQVKDADVLLVRSVTKVNQALLSLNTNLKFVGSATIGTDHIDQSYLASQGIPFTNAPGCNATAVGEFAFIAMLELAKRFDTELKGKVVGIVGAGNTGSAVAKCLEAYGVEVLLNDPLIEADDPRTFVSLEALTERADVISLHVPLTKDGAHKTWYLFDEQRLQNLKPDTWLLNCCRGEVIDNRALIKIKAQRPDIKLVLDVWEGEPEPMLELVPFVELATPHIAGYSLEGKARGTYMLYQKLMAVLGIDADKSMTSLLPTLWSQQVSLDELPSEKALLQLSRFVYDLRDDDELFRKTLLDDSSIKAGENSANNNGFDLMRKNHKHRREFSALKLASAGQSDVDWLLNLGFSGVGR</sequence>
<dbReference type="EC" id="1.1.1.290" evidence="1"/>
<dbReference type="EMBL" id="CP000821">
    <property type="protein sequence ID" value="ABV36260.1"/>
    <property type="molecule type" value="Genomic_DNA"/>
</dbReference>
<dbReference type="RefSeq" id="WP_012141996.1">
    <property type="nucleotide sequence ID" value="NC_009831.1"/>
</dbReference>
<dbReference type="SMR" id="A8FTT7"/>
<dbReference type="STRING" id="425104.Ssed_1649"/>
<dbReference type="KEGG" id="sse:Ssed_1649"/>
<dbReference type="eggNOG" id="COG0111">
    <property type="taxonomic scope" value="Bacteria"/>
</dbReference>
<dbReference type="HOGENOM" id="CLU_019796_4_0_6"/>
<dbReference type="OrthoDB" id="9770208at2"/>
<dbReference type="UniPathway" id="UPA00244">
    <property type="reaction ID" value="UER00310"/>
</dbReference>
<dbReference type="Proteomes" id="UP000002015">
    <property type="component" value="Chromosome"/>
</dbReference>
<dbReference type="GO" id="GO:0005829">
    <property type="term" value="C:cytosol"/>
    <property type="evidence" value="ECO:0007669"/>
    <property type="project" value="TreeGrafter"/>
</dbReference>
<dbReference type="GO" id="GO:0033711">
    <property type="term" value="F:4-phosphoerythronate dehydrogenase activity"/>
    <property type="evidence" value="ECO:0007669"/>
    <property type="project" value="UniProtKB-EC"/>
</dbReference>
<dbReference type="GO" id="GO:0030267">
    <property type="term" value="F:glyoxylate reductase (NADPH) activity"/>
    <property type="evidence" value="ECO:0007669"/>
    <property type="project" value="TreeGrafter"/>
</dbReference>
<dbReference type="GO" id="GO:0016618">
    <property type="term" value="F:hydroxypyruvate reductase [NAD(P)H] activity"/>
    <property type="evidence" value="ECO:0007669"/>
    <property type="project" value="TreeGrafter"/>
</dbReference>
<dbReference type="GO" id="GO:0051287">
    <property type="term" value="F:NAD binding"/>
    <property type="evidence" value="ECO:0007669"/>
    <property type="project" value="InterPro"/>
</dbReference>
<dbReference type="GO" id="GO:0046983">
    <property type="term" value="F:protein dimerization activity"/>
    <property type="evidence" value="ECO:0007669"/>
    <property type="project" value="InterPro"/>
</dbReference>
<dbReference type="GO" id="GO:0008615">
    <property type="term" value="P:pyridoxine biosynthetic process"/>
    <property type="evidence" value="ECO:0007669"/>
    <property type="project" value="UniProtKB-UniRule"/>
</dbReference>
<dbReference type="CDD" id="cd12158">
    <property type="entry name" value="ErythrP_dh"/>
    <property type="match status" value="1"/>
</dbReference>
<dbReference type="Gene3D" id="3.30.1370.170">
    <property type="match status" value="1"/>
</dbReference>
<dbReference type="Gene3D" id="3.40.50.720">
    <property type="entry name" value="NAD(P)-binding Rossmann-like Domain"/>
    <property type="match status" value="2"/>
</dbReference>
<dbReference type="HAMAP" id="MF_01825">
    <property type="entry name" value="PdxB"/>
    <property type="match status" value="1"/>
</dbReference>
<dbReference type="InterPro" id="IPR050223">
    <property type="entry name" value="D-isomer_2-hydroxyacid_DH"/>
</dbReference>
<dbReference type="InterPro" id="IPR006139">
    <property type="entry name" value="D-isomer_2_OHA_DH_cat_dom"/>
</dbReference>
<dbReference type="InterPro" id="IPR029753">
    <property type="entry name" value="D-isomer_DH_CS"/>
</dbReference>
<dbReference type="InterPro" id="IPR006140">
    <property type="entry name" value="D-isomer_DH_NAD-bd"/>
</dbReference>
<dbReference type="InterPro" id="IPR020921">
    <property type="entry name" value="Erythronate-4-P_DHase"/>
</dbReference>
<dbReference type="InterPro" id="IPR024531">
    <property type="entry name" value="Erythronate-4-P_DHase_dimer"/>
</dbReference>
<dbReference type="InterPro" id="IPR036291">
    <property type="entry name" value="NAD(P)-bd_dom_sf"/>
</dbReference>
<dbReference type="InterPro" id="IPR038251">
    <property type="entry name" value="PdxB_dimer_sf"/>
</dbReference>
<dbReference type="PANTHER" id="PTHR10996:SF178">
    <property type="entry name" value="2-HYDROXYACID DEHYDROGENASE YGL185C-RELATED"/>
    <property type="match status" value="1"/>
</dbReference>
<dbReference type="PANTHER" id="PTHR10996">
    <property type="entry name" value="2-HYDROXYACID DEHYDROGENASE-RELATED"/>
    <property type="match status" value="1"/>
</dbReference>
<dbReference type="Pfam" id="PF00389">
    <property type="entry name" value="2-Hacid_dh"/>
    <property type="match status" value="1"/>
</dbReference>
<dbReference type="Pfam" id="PF02826">
    <property type="entry name" value="2-Hacid_dh_C"/>
    <property type="match status" value="1"/>
</dbReference>
<dbReference type="Pfam" id="PF11890">
    <property type="entry name" value="DUF3410"/>
    <property type="match status" value="1"/>
</dbReference>
<dbReference type="SUPFAM" id="SSF52283">
    <property type="entry name" value="Formate/glycerate dehydrogenase catalytic domain-like"/>
    <property type="match status" value="1"/>
</dbReference>
<dbReference type="SUPFAM" id="SSF51735">
    <property type="entry name" value="NAD(P)-binding Rossmann-fold domains"/>
    <property type="match status" value="1"/>
</dbReference>
<dbReference type="PROSITE" id="PS00671">
    <property type="entry name" value="D_2_HYDROXYACID_DH_3"/>
    <property type="match status" value="1"/>
</dbReference>
<feature type="chain" id="PRO_1000088430" description="Erythronate-4-phosphate dehydrogenase">
    <location>
        <begin position="1"/>
        <end position="387"/>
    </location>
</feature>
<feature type="active site" evidence="1">
    <location>
        <position position="208"/>
    </location>
</feature>
<feature type="active site" evidence="1">
    <location>
        <position position="237"/>
    </location>
</feature>
<feature type="active site" description="Proton donor" evidence="1">
    <location>
        <position position="254"/>
    </location>
</feature>
<feature type="binding site" evidence="1">
    <location>
        <position position="45"/>
    </location>
    <ligand>
        <name>substrate</name>
    </ligand>
</feature>
<feature type="binding site" evidence="1">
    <location>
        <position position="67"/>
    </location>
    <ligand>
        <name>substrate</name>
    </ligand>
</feature>
<feature type="binding site" evidence="1">
    <location>
        <position position="147"/>
    </location>
    <ligand>
        <name>NAD(+)</name>
        <dbReference type="ChEBI" id="CHEBI:57540"/>
    </ligand>
</feature>
<feature type="binding site" evidence="1">
    <location>
        <position position="232"/>
    </location>
    <ligand>
        <name>NAD(+)</name>
        <dbReference type="ChEBI" id="CHEBI:57540"/>
    </ligand>
</feature>
<feature type="binding site" evidence="1">
    <location>
        <position position="257"/>
    </location>
    <ligand>
        <name>NAD(+)</name>
        <dbReference type="ChEBI" id="CHEBI:57540"/>
    </ligand>
</feature>
<feature type="binding site" evidence="1">
    <location>
        <position position="258"/>
    </location>
    <ligand>
        <name>substrate</name>
    </ligand>
</feature>
<gene>
    <name evidence="1" type="primary">pdxB</name>
    <name type="ordered locus">Ssed_1649</name>
</gene>
<reference key="1">
    <citation type="submission" date="2007-08" db="EMBL/GenBank/DDBJ databases">
        <title>Complete sequence of Shewanella sediminis HAW-EB3.</title>
        <authorList>
            <consortium name="US DOE Joint Genome Institute"/>
            <person name="Copeland A."/>
            <person name="Lucas S."/>
            <person name="Lapidus A."/>
            <person name="Barry K."/>
            <person name="Glavina del Rio T."/>
            <person name="Dalin E."/>
            <person name="Tice H."/>
            <person name="Pitluck S."/>
            <person name="Chertkov O."/>
            <person name="Brettin T."/>
            <person name="Bruce D."/>
            <person name="Detter J.C."/>
            <person name="Han C."/>
            <person name="Schmutz J."/>
            <person name="Larimer F."/>
            <person name="Land M."/>
            <person name="Hauser L."/>
            <person name="Kyrpides N."/>
            <person name="Kim E."/>
            <person name="Zhao J.-S."/>
            <person name="Richardson P."/>
        </authorList>
    </citation>
    <scope>NUCLEOTIDE SEQUENCE [LARGE SCALE GENOMIC DNA]</scope>
    <source>
        <strain>HAW-EB3</strain>
    </source>
</reference>
<evidence type="ECO:0000255" key="1">
    <source>
        <dbReference type="HAMAP-Rule" id="MF_01825"/>
    </source>
</evidence>
<organism>
    <name type="scientific">Shewanella sediminis (strain HAW-EB3)</name>
    <dbReference type="NCBI Taxonomy" id="425104"/>
    <lineage>
        <taxon>Bacteria</taxon>
        <taxon>Pseudomonadati</taxon>
        <taxon>Pseudomonadota</taxon>
        <taxon>Gammaproteobacteria</taxon>
        <taxon>Alteromonadales</taxon>
        <taxon>Shewanellaceae</taxon>
        <taxon>Shewanella</taxon>
    </lineage>
</organism>